<protein>
    <recommendedName>
        <fullName evidence="1">Large ribosomal subunit protein uL23</fullName>
    </recommendedName>
    <alternativeName>
        <fullName evidence="3">50S ribosomal protein L23</fullName>
    </alternativeName>
</protein>
<proteinExistence type="evidence at protein level"/>
<evidence type="ECO:0000255" key="1">
    <source>
        <dbReference type="HAMAP-Rule" id="MF_01369"/>
    </source>
</evidence>
<evidence type="ECO:0000269" key="2">
    <source>
    </source>
</evidence>
<evidence type="ECO:0000305" key="3"/>
<evidence type="ECO:0007744" key="4">
    <source>
        <dbReference type="PDB" id="6HA1"/>
    </source>
</evidence>
<evidence type="ECO:0007744" key="5">
    <source>
        <dbReference type="PDB" id="6HA8"/>
    </source>
</evidence>
<evidence type="ECO:0007829" key="6">
    <source>
        <dbReference type="PDB" id="8S1P"/>
    </source>
</evidence>
<comment type="function">
    <text evidence="1">One of the early assembly proteins it binds 23S rRNA. One of the proteins that surrounds the polypeptide exit tunnel on the outside of the ribosome. Forms the main docking site for trigger factor binding to the ribosome.</text>
</comment>
<comment type="subunit">
    <text evidence="1 2">Part of the 50S ribosomal subunit (PubMed:30126986). Contacts protein L29, and trigger factor when it is bound to the ribosome (By similarity).</text>
</comment>
<comment type="similarity">
    <text evidence="1">Belongs to the universal ribosomal protein uL23 family.</text>
</comment>
<dbReference type="EMBL" id="U43929">
    <property type="protein sequence ID" value="AAC45958.1"/>
    <property type="molecule type" value="Genomic_DNA"/>
</dbReference>
<dbReference type="EMBL" id="D50302">
    <property type="protein sequence ID" value="BAA08833.1"/>
    <property type="molecule type" value="Genomic_DNA"/>
</dbReference>
<dbReference type="EMBL" id="AL009126">
    <property type="protein sequence ID" value="CAB11894.2"/>
    <property type="molecule type" value="Genomic_DNA"/>
</dbReference>
<dbReference type="PIR" id="A69697">
    <property type="entry name" value="A69697"/>
</dbReference>
<dbReference type="RefSeq" id="NP_387999.2">
    <property type="nucleotide sequence ID" value="NC_000964.3"/>
</dbReference>
<dbReference type="RefSeq" id="WP_003156467.1">
    <property type="nucleotide sequence ID" value="NZ_OZ025638.1"/>
</dbReference>
<dbReference type="PDB" id="3J3V">
    <property type="method" value="EM"/>
    <property type="resolution" value="13.30 A"/>
    <property type="chains" value="T=1-95"/>
</dbReference>
<dbReference type="PDB" id="3J3W">
    <property type="method" value="EM"/>
    <property type="resolution" value="10.70 A"/>
    <property type="chains" value="T=1-95"/>
</dbReference>
<dbReference type="PDB" id="3J9W">
    <property type="method" value="EM"/>
    <property type="resolution" value="3.90 A"/>
    <property type="chains" value="BW=1-95"/>
</dbReference>
<dbReference type="PDB" id="5NJT">
    <property type="method" value="EM"/>
    <property type="resolution" value="3.80 A"/>
    <property type="chains" value="m=1-93"/>
</dbReference>
<dbReference type="PDB" id="6HA1">
    <property type="method" value="EM"/>
    <property type="resolution" value="3.10 A"/>
    <property type="chains" value="T=1-95"/>
</dbReference>
<dbReference type="PDB" id="6HA8">
    <property type="method" value="EM"/>
    <property type="resolution" value="3.50 A"/>
    <property type="chains" value="T=1-95"/>
</dbReference>
<dbReference type="PDB" id="6HTQ">
    <property type="method" value="EM"/>
    <property type="resolution" value="4.50 A"/>
    <property type="chains" value="T=2-91"/>
</dbReference>
<dbReference type="PDB" id="6PPF">
    <property type="method" value="EM"/>
    <property type="resolution" value="3.40 A"/>
    <property type="chains" value="T=1-95"/>
</dbReference>
<dbReference type="PDB" id="6PPK">
    <property type="method" value="EM"/>
    <property type="resolution" value="4.40 A"/>
    <property type="chains" value="T=1-95"/>
</dbReference>
<dbReference type="PDB" id="6PVK">
    <property type="method" value="EM"/>
    <property type="resolution" value="3.40 A"/>
    <property type="chains" value="T=1-95"/>
</dbReference>
<dbReference type="PDB" id="6TNN">
    <property type="method" value="EM"/>
    <property type="resolution" value="3.07 A"/>
    <property type="chains" value="m=1-95"/>
</dbReference>
<dbReference type="PDB" id="6TPQ">
    <property type="method" value="EM"/>
    <property type="resolution" value="3.07 A"/>
    <property type="chains" value="m=1-95"/>
</dbReference>
<dbReference type="PDB" id="7AQC">
    <property type="method" value="EM"/>
    <property type="resolution" value="2.99 A"/>
    <property type="chains" value="h=1-95"/>
</dbReference>
<dbReference type="PDB" id="7AQD">
    <property type="method" value="EM"/>
    <property type="resolution" value="3.10 A"/>
    <property type="chains" value="h=1-95"/>
</dbReference>
<dbReference type="PDB" id="7AS8">
    <property type="method" value="EM"/>
    <property type="resolution" value="2.90 A"/>
    <property type="chains" value="X=1-95"/>
</dbReference>
<dbReference type="PDB" id="7AS9">
    <property type="method" value="EM"/>
    <property type="resolution" value="3.50 A"/>
    <property type="chains" value="X=1-95"/>
</dbReference>
<dbReference type="PDB" id="7O5B">
    <property type="method" value="EM"/>
    <property type="resolution" value="3.33 A"/>
    <property type="chains" value="s=1-95"/>
</dbReference>
<dbReference type="PDB" id="7OPE">
    <property type="method" value="EM"/>
    <property type="resolution" value="3.20 A"/>
    <property type="chains" value="X=1-95"/>
</dbReference>
<dbReference type="PDB" id="7QGU">
    <property type="method" value="EM"/>
    <property type="resolution" value="4.75 A"/>
    <property type="chains" value="T=1-95"/>
</dbReference>
<dbReference type="PDB" id="7QH4">
    <property type="method" value="EM"/>
    <property type="resolution" value="5.45 A"/>
    <property type="chains" value="T=1-95"/>
</dbReference>
<dbReference type="PDB" id="7QV1">
    <property type="method" value="EM"/>
    <property type="resolution" value="3.50 A"/>
    <property type="chains" value="T=1-95"/>
</dbReference>
<dbReference type="PDB" id="7QV2">
    <property type="method" value="EM"/>
    <property type="resolution" value="3.50 A"/>
    <property type="chains" value="T=1-95"/>
</dbReference>
<dbReference type="PDB" id="7QV3">
    <property type="method" value="EM"/>
    <property type="resolution" value="5.14 A"/>
    <property type="chains" value="T=1-95"/>
</dbReference>
<dbReference type="PDB" id="7S9U">
    <property type="method" value="EM"/>
    <property type="resolution" value="3.20 A"/>
    <property type="chains" value="T=1-95"/>
</dbReference>
<dbReference type="PDB" id="7SAE">
    <property type="method" value="EM"/>
    <property type="resolution" value="3.00 A"/>
    <property type="chains" value="T=1-95"/>
</dbReference>
<dbReference type="PDB" id="8BUU">
    <property type="method" value="EM"/>
    <property type="resolution" value="2.90 A"/>
    <property type="chains" value="T=1-95"/>
</dbReference>
<dbReference type="PDB" id="8QCQ">
    <property type="method" value="EM"/>
    <property type="resolution" value="2.30 A"/>
    <property type="chains" value="T=1-95"/>
</dbReference>
<dbReference type="PDB" id="8QPP">
    <property type="method" value="EM"/>
    <property type="resolution" value="3.40 A"/>
    <property type="chains" value="s=1-93"/>
</dbReference>
<dbReference type="PDB" id="8R55">
    <property type="method" value="EM"/>
    <property type="resolution" value="3.57 A"/>
    <property type="chains" value="s=1-93"/>
</dbReference>
<dbReference type="PDB" id="8S1P">
    <property type="method" value="EM"/>
    <property type="resolution" value="1.96 A"/>
    <property type="chains" value="T=1-95"/>
</dbReference>
<dbReference type="PDB" id="8S1U">
    <property type="method" value="EM"/>
    <property type="resolution" value="3.40 A"/>
    <property type="chains" value="T=1-95"/>
</dbReference>
<dbReference type="PDB" id="9BS0">
    <property type="method" value="EM"/>
    <property type="resolution" value="3.30 A"/>
    <property type="chains" value="O=1-95"/>
</dbReference>
<dbReference type="PDB" id="9BSL">
    <property type="method" value="EM"/>
    <property type="resolution" value="3.10 A"/>
    <property type="chains" value="O=1-95"/>
</dbReference>
<dbReference type="PDB" id="9BSS">
    <property type="method" value="EM"/>
    <property type="resolution" value="3.10 A"/>
    <property type="chains" value="O=1-95"/>
</dbReference>
<dbReference type="PDBsum" id="3J3V"/>
<dbReference type="PDBsum" id="3J3W"/>
<dbReference type="PDBsum" id="3J9W"/>
<dbReference type="PDBsum" id="5NJT"/>
<dbReference type="PDBsum" id="6HA1"/>
<dbReference type="PDBsum" id="6HA8"/>
<dbReference type="PDBsum" id="6HTQ"/>
<dbReference type="PDBsum" id="6PPF"/>
<dbReference type="PDBsum" id="6PPK"/>
<dbReference type="PDBsum" id="6PVK"/>
<dbReference type="PDBsum" id="6TNN"/>
<dbReference type="PDBsum" id="6TPQ"/>
<dbReference type="PDBsum" id="7AQC"/>
<dbReference type="PDBsum" id="7AQD"/>
<dbReference type="PDBsum" id="7AS8"/>
<dbReference type="PDBsum" id="7AS9"/>
<dbReference type="PDBsum" id="7O5B"/>
<dbReference type="PDBsum" id="7OPE"/>
<dbReference type="PDBsum" id="7QGU"/>
<dbReference type="PDBsum" id="7QH4"/>
<dbReference type="PDBsum" id="7QV1"/>
<dbReference type="PDBsum" id="7QV2"/>
<dbReference type="PDBsum" id="7QV3"/>
<dbReference type="PDBsum" id="7S9U"/>
<dbReference type="PDBsum" id="7SAE"/>
<dbReference type="PDBsum" id="8BUU"/>
<dbReference type="PDBsum" id="8QCQ"/>
<dbReference type="PDBsum" id="8QPP"/>
<dbReference type="PDBsum" id="8R55"/>
<dbReference type="PDBsum" id="8S1P"/>
<dbReference type="PDBsum" id="8S1U"/>
<dbReference type="PDBsum" id="9BS0"/>
<dbReference type="PDBsum" id="9BSL"/>
<dbReference type="PDBsum" id="9BSS"/>
<dbReference type="EMDB" id="EMD-0176"/>
<dbReference type="EMDB" id="EMD-0177"/>
<dbReference type="EMDB" id="EMD-0270"/>
<dbReference type="EMDB" id="EMD-10535"/>
<dbReference type="EMDB" id="EMD-10543"/>
<dbReference type="EMDB" id="EMD-11862"/>
<dbReference type="EMDB" id="EMD-11864"/>
<dbReference type="EMDB" id="EMD-11889"/>
<dbReference type="EMDB" id="EMD-11890"/>
<dbReference type="EMDB" id="EMD-12734"/>
<dbReference type="EMDB" id="EMD-13017"/>
<dbReference type="EMDB" id="EMD-14157"/>
<dbReference type="EMDB" id="EMD-14158"/>
<dbReference type="EMDB" id="EMD-14159"/>
<dbReference type="EMDB" id="EMD-16246"/>
<dbReference type="EMDB" id="EMD-18332"/>
<dbReference type="EMDB" id="EMD-19638"/>
<dbReference type="EMDB" id="EMD-19641"/>
<dbReference type="EMDB" id="EMD-3656"/>
<dbReference type="EMDB" id="EMD-44849"/>
<dbReference type="EMDB" id="EMD-44869"/>
<dbReference type="EMDB" id="EMD-44871"/>
<dbReference type="SMR" id="P42924"/>
<dbReference type="FunCoup" id="P42924">
    <property type="interactions" value="438"/>
</dbReference>
<dbReference type="IntAct" id="P42924">
    <property type="interactions" value="3"/>
</dbReference>
<dbReference type="STRING" id="224308.BSU01180"/>
<dbReference type="jPOST" id="P42924"/>
<dbReference type="PaxDb" id="224308-BSU01180"/>
<dbReference type="EnsemblBacteria" id="CAB11894">
    <property type="protein sequence ID" value="CAB11894"/>
    <property type="gene ID" value="BSU_01180"/>
</dbReference>
<dbReference type="GeneID" id="93079282"/>
<dbReference type="GeneID" id="936820"/>
<dbReference type="KEGG" id="bsu:BSU01180"/>
<dbReference type="PATRIC" id="fig|224308.179.peg.121"/>
<dbReference type="eggNOG" id="COG0089">
    <property type="taxonomic scope" value="Bacteria"/>
</dbReference>
<dbReference type="InParanoid" id="P42924"/>
<dbReference type="OrthoDB" id="9793353at2"/>
<dbReference type="PhylomeDB" id="P42924"/>
<dbReference type="BioCyc" id="BSUB:BSU01180-MONOMER"/>
<dbReference type="EvolutionaryTrace" id="P42924"/>
<dbReference type="PRO" id="PR:P42924"/>
<dbReference type="Proteomes" id="UP000001570">
    <property type="component" value="Chromosome"/>
</dbReference>
<dbReference type="GO" id="GO:0022625">
    <property type="term" value="C:cytosolic large ribosomal subunit"/>
    <property type="evidence" value="ECO:0000318"/>
    <property type="project" value="GO_Central"/>
</dbReference>
<dbReference type="GO" id="GO:0019843">
    <property type="term" value="F:rRNA binding"/>
    <property type="evidence" value="ECO:0007669"/>
    <property type="project" value="UniProtKB-UniRule"/>
</dbReference>
<dbReference type="GO" id="GO:0003735">
    <property type="term" value="F:structural constituent of ribosome"/>
    <property type="evidence" value="ECO:0000318"/>
    <property type="project" value="GO_Central"/>
</dbReference>
<dbReference type="GO" id="GO:0006412">
    <property type="term" value="P:translation"/>
    <property type="evidence" value="ECO:0007669"/>
    <property type="project" value="UniProtKB-UniRule"/>
</dbReference>
<dbReference type="FunFam" id="3.30.70.330:FF:000001">
    <property type="entry name" value="50S ribosomal protein L23"/>
    <property type="match status" value="1"/>
</dbReference>
<dbReference type="Gene3D" id="3.30.70.330">
    <property type="match status" value="1"/>
</dbReference>
<dbReference type="HAMAP" id="MF_01369_B">
    <property type="entry name" value="Ribosomal_uL23_B"/>
    <property type="match status" value="1"/>
</dbReference>
<dbReference type="InterPro" id="IPR012677">
    <property type="entry name" value="Nucleotide-bd_a/b_plait_sf"/>
</dbReference>
<dbReference type="InterPro" id="IPR013025">
    <property type="entry name" value="Ribosomal_uL23-like"/>
</dbReference>
<dbReference type="InterPro" id="IPR012678">
    <property type="entry name" value="Ribosomal_uL23/eL15/eS24_sf"/>
</dbReference>
<dbReference type="InterPro" id="IPR001014">
    <property type="entry name" value="Ribosomal_uL23_CS"/>
</dbReference>
<dbReference type="NCBIfam" id="NF004363">
    <property type="entry name" value="PRK05738.2-4"/>
    <property type="match status" value="1"/>
</dbReference>
<dbReference type="PANTHER" id="PTHR11620">
    <property type="entry name" value="60S RIBOSOMAL PROTEIN L23A"/>
    <property type="match status" value="1"/>
</dbReference>
<dbReference type="Pfam" id="PF00276">
    <property type="entry name" value="Ribosomal_L23"/>
    <property type="match status" value="1"/>
</dbReference>
<dbReference type="SUPFAM" id="SSF54189">
    <property type="entry name" value="Ribosomal proteins S24e, L23 and L15e"/>
    <property type="match status" value="1"/>
</dbReference>
<dbReference type="PROSITE" id="PS00050">
    <property type="entry name" value="RIBOSOMAL_L23"/>
    <property type="match status" value="1"/>
</dbReference>
<keyword id="KW-0002">3D-structure</keyword>
<keyword id="KW-1185">Reference proteome</keyword>
<keyword id="KW-0687">Ribonucleoprotein</keyword>
<keyword id="KW-0689">Ribosomal protein</keyword>
<keyword id="KW-0694">RNA-binding</keyword>
<keyword id="KW-0699">rRNA-binding</keyword>
<accession>P42924</accession>
<reference key="1">
    <citation type="journal article" date="1997" name="J. Bacteriol.">
        <title>Analysis of the Bacillus subtilis S10 ribosomal protein gene cluster identifies two promoters that may be responsible for transcription of the entire 15-kilobase S10-spc-alpha cluster.</title>
        <authorList>
            <person name="Li X."/>
            <person name="Lindahl L."/>
            <person name="Sha Y."/>
            <person name="Zengel J.M."/>
        </authorList>
    </citation>
    <scope>NUCLEOTIDE SEQUENCE [GENOMIC DNA]</scope>
    <source>
        <strain>SG38</strain>
    </source>
</reference>
<reference key="2">
    <citation type="journal article" date="1996" name="Microbiology">
        <title>Sequence analysis of a 50 kb region between spo0H and rrnH on the Bacillus subtilis chromosome.</title>
        <authorList>
            <person name="Yasumoto K."/>
            <person name="Liu H."/>
            <person name="Jeong S.M."/>
            <person name="Ohashi Y."/>
            <person name="Kakinuma S."/>
            <person name="Tanaka K."/>
            <person name="Kawamura F."/>
            <person name="Yoshikawa H."/>
            <person name="Takahashi H."/>
        </authorList>
    </citation>
    <scope>NUCLEOTIDE SEQUENCE [GENOMIC DNA]</scope>
    <source>
        <strain>168</strain>
    </source>
</reference>
<reference key="3">
    <citation type="journal article" date="1997" name="Nature">
        <title>The complete genome sequence of the Gram-positive bacterium Bacillus subtilis.</title>
        <authorList>
            <person name="Kunst F."/>
            <person name="Ogasawara N."/>
            <person name="Moszer I."/>
            <person name="Albertini A.M."/>
            <person name="Alloni G."/>
            <person name="Azevedo V."/>
            <person name="Bertero M.G."/>
            <person name="Bessieres P."/>
            <person name="Bolotin A."/>
            <person name="Borchert S."/>
            <person name="Borriss R."/>
            <person name="Boursier L."/>
            <person name="Brans A."/>
            <person name="Braun M."/>
            <person name="Brignell S.C."/>
            <person name="Bron S."/>
            <person name="Brouillet S."/>
            <person name="Bruschi C.V."/>
            <person name="Caldwell B."/>
            <person name="Capuano V."/>
            <person name="Carter N.M."/>
            <person name="Choi S.-K."/>
            <person name="Codani J.-J."/>
            <person name="Connerton I.F."/>
            <person name="Cummings N.J."/>
            <person name="Daniel R.A."/>
            <person name="Denizot F."/>
            <person name="Devine K.M."/>
            <person name="Duesterhoeft A."/>
            <person name="Ehrlich S.D."/>
            <person name="Emmerson P.T."/>
            <person name="Entian K.-D."/>
            <person name="Errington J."/>
            <person name="Fabret C."/>
            <person name="Ferrari E."/>
            <person name="Foulger D."/>
            <person name="Fritz C."/>
            <person name="Fujita M."/>
            <person name="Fujita Y."/>
            <person name="Fuma S."/>
            <person name="Galizzi A."/>
            <person name="Galleron N."/>
            <person name="Ghim S.-Y."/>
            <person name="Glaser P."/>
            <person name="Goffeau A."/>
            <person name="Golightly E.J."/>
            <person name="Grandi G."/>
            <person name="Guiseppi G."/>
            <person name="Guy B.J."/>
            <person name="Haga K."/>
            <person name="Haiech J."/>
            <person name="Harwood C.R."/>
            <person name="Henaut A."/>
            <person name="Hilbert H."/>
            <person name="Holsappel S."/>
            <person name="Hosono S."/>
            <person name="Hullo M.-F."/>
            <person name="Itaya M."/>
            <person name="Jones L.-M."/>
            <person name="Joris B."/>
            <person name="Karamata D."/>
            <person name="Kasahara Y."/>
            <person name="Klaerr-Blanchard M."/>
            <person name="Klein C."/>
            <person name="Kobayashi Y."/>
            <person name="Koetter P."/>
            <person name="Koningstein G."/>
            <person name="Krogh S."/>
            <person name="Kumano M."/>
            <person name="Kurita K."/>
            <person name="Lapidus A."/>
            <person name="Lardinois S."/>
            <person name="Lauber J."/>
            <person name="Lazarevic V."/>
            <person name="Lee S.-M."/>
            <person name="Levine A."/>
            <person name="Liu H."/>
            <person name="Masuda S."/>
            <person name="Mauel C."/>
            <person name="Medigue C."/>
            <person name="Medina N."/>
            <person name="Mellado R.P."/>
            <person name="Mizuno M."/>
            <person name="Moestl D."/>
            <person name="Nakai S."/>
            <person name="Noback M."/>
            <person name="Noone D."/>
            <person name="O'Reilly M."/>
            <person name="Ogawa K."/>
            <person name="Ogiwara A."/>
            <person name="Oudega B."/>
            <person name="Park S.-H."/>
            <person name="Parro V."/>
            <person name="Pohl T.M."/>
            <person name="Portetelle D."/>
            <person name="Porwollik S."/>
            <person name="Prescott A.M."/>
            <person name="Presecan E."/>
            <person name="Pujic P."/>
            <person name="Purnelle B."/>
            <person name="Rapoport G."/>
            <person name="Rey M."/>
            <person name="Reynolds S."/>
            <person name="Rieger M."/>
            <person name="Rivolta C."/>
            <person name="Rocha E."/>
            <person name="Roche B."/>
            <person name="Rose M."/>
            <person name="Sadaie Y."/>
            <person name="Sato T."/>
            <person name="Scanlan E."/>
            <person name="Schleich S."/>
            <person name="Schroeter R."/>
            <person name="Scoffone F."/>
            <person name="Sekiguchi J."/>
            <person name="Sekowska A."/>
            <person name="Seror S.J."/>
            <person name="Serror P."/>
            <person name="Shin B.-S."/>
            <person name="Soldo B."/>
            <person name="Sorokin A."/>
            <person name="Tacconi E."/>
            <person name="Takagi T."/>
            <person name="Takahashi H."/>
            <person name="Takemaru K."/>
            <person name="Takeuchi M."/>
            <person name="Tamakoshi A."/>
            <person name="Tanaka T."/>
            <person name="Terpstra P."/>
            <person name="Tognoni A."/>
            <person name="Tosato V."/>
            <person name="Uchiyama S."/>
            <person name="Vandenbol M."/>
            <person name="Vannier F."/>
            <person name="Vassarotti A."/>
            <person name="Viari A."/>
            <person name="Wambutt R."/>
            <person name="Wedler E."/>
            <person name="Wedler H."/>
            <person name="Weitzenegger T."/>
            <person name="Winters P."/>
            <person name="Wipat A."/>
            <person name="Yamamoto H."/>
            <person name="Yamane K."/>
            <person name="Yasumoto K."/>
            <person name="Yata K."/>
            <person name="Yoshida K."/>
            <person name="Yoshikawa H.-F."/>
            <person name="Zumstein E."/>
            <person name="Yoshikawa H."/>
            <person name="Danchin A."/>
        </authorList>
    </citation>
    <scope>NUCLEOTIDE SEQUENCE [LARGE SCALE GENOMIC DNA]</scope>
    <source>
        <strain>168</strain>
    </source>
</reference>
<reference key="4">
    <citation type="journal article" date="2009" name="Microbiology">
        <title>From a consortium sequence to a unified sequence: the Bacillus subtilis 168 reference genome a decade later.</title>
        <authorList>
            <person name="Barbe V."/>
            <person name="Cruveiller S."/>
            <person name="Kunst F."/>
            <person name="Lenoble P."/>
            <person name="Meurice G."/>
            <person name="Sekowska A."/>
            <person name="Vallenet D."/>
            <person name="Wang T."/>
            <person name="Moszer I."/>
            <person name="Medigue C."/>
            <person name="Danchin A."/>
        </authorList>
    </citation>
    <scope>SEQUENCE REVISION TO 24 AND 39</scope>
</reference>
<reference evidence="4 5" key="5">
    <citation type="journal article" date="2018" name="Proc. Natl. Acad. Sci. U.S.A.">
        <title>Structural basis for antibiotic resistance mediated by the Bacillus subtilis ABCF ATPase VmlR.</title>
        <authorList>
            <person name="Crowe-McAuliffe C."/>
            <person name="Graf M."/>
            <person name="Huter P."/>
            <person name="Takada H."/>
            <person name="Abdelshahid M."/>
            <person name="Novacek J."/>
            <person name="Murina V."/>
            <person name="Atkinson G.C."/>
            <person name="Hauryliuk V."/>
            <person name="Wilson D.N."/>
        </authorList>
    </citation>
    <scope>STRUCTURE BY ELECTRON MICROSCOPY (3.10 ANGSTROMS) OF 1-95 WITH AND WITHOUT VIRGINIAMYCIN M</scope>
    <scope>SUBUNIT</scope>
</reference>
<feature type="chain" id="PRO_0000129398" description="Large ribosomal subunit protein uL23">
    <location>
        <begin position="1"/>
        <end position="95"/>
    </location>
</feature>
<feature type="sequence conflict" description="In Ref. 1; AAC45958 and 2; BAA08833." evidence="3" ref="1 2">
    <original>K</original>
    <variation>E</variation>
    <location>
        <position position="24"/>
    </location>
</feature>
<feature type="sequence conflict" description="In Ref. 1; AAC45958 and 2; BAA08833." evidence="3" ref="1 2">
    <original>V</original>
    <variation>A</variation>
    <location>
        <position position="39"/>
    </location>
</feature>
<feature type="helix" evidence="6">
    <location>
        <begin position="4"/>
        <end position="7"/>
    </location>
</feature>
<feature type="strand" evidence="6">
    <location>
        <begin position="8"/>
        <end position="11"/>
    </location>
</feature>
<feature type="helix" evidence="6">
    <location>
        <begin position="15"/>
        <end position="22"/>
    </location>
</feature>
<feature type="strand" evidence="6">
    <location>
        <begin position="25"/>
        <end position="30"/>
    </location>
</feature>
<feature type="helix" evidence="6">
    <location>
        <begin position="36"/>
        <end position="47"/>
    </location>
</feature>
<feature type="strand" evidence="6">
    <location>
        <begin position="51"/>
        <end position="59"/>
    </location>
</feature>
<feature type="strand" evidence="6">
    <location>
        <begin position="63"/>
        <end position="66"/>
    </location>
</feature>
<feature type="strand" evidence="6">
    <location>
        <begin position="69"/>
        <end position="72"/>
    </location>
</feature>
<feature type="strand" evidence="6">
    <location>
        <begin position="76"/>
        <end position="83"/>
    </location>
</feature>
<feature type="strand" evidence="6">
    <location>
        <begin position="85"/>
        <end position="87"/>
    </location>
</feature>
<name>RL23_BACSU</name>
<sequence>MKDPRDVLKRPVITERSADLMTEKKYTFEVDVRANKTEVKDAVESIFGVKVDKVNIMNYKGKSKRVGRYTGMTSRRRKAIVKLTADSKEIEIFEA</sequence>
<gene>
    <name evidence="1" type="primary">rplW</name>
    <name type="ordered locus">BSU01180</name>
</gene>
<organism>
    <name type="scientific">Bacillus subtilis (strain 168)</name>
    <dbReference type="NCBI Taxonomy" id="224308"/>
    <lineage>
        <taxon>Bacteria</taxon>
        <taxon>Bacillati</taxon>
        <taxon>Bacillota</taxon>
        <taxon>Bacilli</taxon>
        <taxon>Bacillales</taxon>
        <taxon>Bacillaceae</taxon>
        <taxon>Bacillus</taxon>
    </lineage>
</organism>